<gene>
    <name type="ordered locus">BamMC406_5004</name>
</gene>
<accession>B1YZQ0</accession>
<dbReference type="EC" id="1.14.11.-" evidence="1"/>
<dbReference type="EMBL" id="CP001026">
    <property type="protein sequence ID" value="ACB67450.1"/>
    <property type="molecule type" value="Genomic_DNA"/>
</dbReference>
<dbReference type="RefSeq" id="WP_012366721.1">
    <property type="nucleotide sequence ID" value="NC_010552.1"/>
</dbReference>
<dbReference type="SMR" id="B1YZQ0"/>
<dbReference type="KEGG" id="bac:BamMC406_5004"/>
<dbReference type="HOGENOM" id="CLU_106663_0_0_4"/>
<dbReference type="OrthoDB" id="9812472at2"/>
<dbReference type="Proteomes" id="UP000001680">
    <property type="component" value="Chromosome 2"/>
</dbReference>
<dbReference type="GO" id="GO:0016706">
    <property type="term" value="F:2-oxoglutarate-dependent dioxygenase activity"/>
    <property type="evidence" value="ECO:0007669"/>
    <property type="project" value="UniProtKB-UniRule"/>
</dbReference>
<dbReference type="GO" id="GO:0005506">
    <property type="term" value="F:iron ion binding"/>
    <property type="evidence" value="ECO:0007669"/>
    <property type="project" value="UniProtKB-UniRule"/>
</dbReference>
<dbReference type="GO" id="GO:0031418">
    <property type="term" value="F:L-ascorbic acid binding"/>
    <property type="evidence" value="ECO:0007669"/>
    <property type="project" value="UniProtKB-KW"/>
</dbReference>
<dbReference type="GO" id="GO:0006974">
    <property type="term" value="P:DNA damage response"/>
    <property type="evidence" value="ECO:0007669"/>
    <property type="project" value="TreeGrafter"/>
</dbReference>
<dbReference type="GO" id="GO:0006879">
    <property type="term" value="P:intracellular iron ion homeostasis"/>
    <property type="evidence" value="ECO:0007669"/>
    <property type="project" value="TreeGrafter"/>
</dbReference>
<dbReference type="Gene3D" id="2.60.120.620">
    <property type="entry name" value="q2cbj1_9rhob like domain"/>
    <property type="match status" value="1"/>
</dbReference>
<dbReference type="Gene3D" id="4.10.860.20">
    <property type="entry name" value="Rabenosyn, Rab binding domain"/>
    <property type="match status" value="1"/>
</dbReference>
<dbReference type="HAMAP" id="MF_00657">
    <property type="entry name" value="Hydroxyl_YbiX"/>
    <property type="match status" value="1"/>
</dbReference>
<dbReference type="InterPro" id="IPR005123">
    <property type="entry name" value="Oxoglu/Fe-dep_dioxygenase_dom"/>
</dbReference>
<dbReference type="InterPro" id="IPR041097">
    <property type="entry name" value="PKHD_C"/>
</dbReference>
<dbReference type="InterPro" id="IPR023550">
    <property type="entry name" value="PKHD_hydroxylase"/>
</dbReference>
<dbReference type="InterPro" id="IPR006620">
    <property type="entry name" value="Pro_4_hyd_alph"/>
</dbReference>
<dbReference type="InterPro" id="IPR044862">
    <property type="entry name" value="Pro_4_hyd_alph_FE2OG_OXY"/>
</dbReference>
<dbReference type="NCBIfam" id="NF003974">
    <property type="entry name" value="PRK05467.1-3"/>
    <property type="match status" value="1"/>
</dbReference>
<dbReference type="NCBIfam" id="NF003975">
    <property type="entry name" value="PRK05467.1-4"/>
    <property type="match status" value="1"/>
</dbReference>
<dbReference type="PANTHER" id="PTHR41536">
    <property type="entry name" value="PKHD-TYPE HYDROXYLASE YBIX"/>
    <property type="match status" value="1"/>
</dbReference>
<dbReference type="PANTHER" id="PTHR41536:SF1">
    <property type="entry name" value="PKHD-TYPE HYDROXYLASE YBIX"/>
    <property type="match status" value="1"/>
</dbReference>
<dbReference type="Pfam" id="PF13640">
    <property type="entry name" value="2OG-FeII_Oxy_3"/>
    <property type="match status" value="1"/>
</dbReference>
<dbReference type="Pfam" id="PF18331">
    <property type="entry name" value="PKHD_C"/>
    <property type="match status" value="1"/>
</dbReference>
<dbReference type="SMART" id="SM00702">
    <property type="entry name" value="P4Hc"/>
    <property type="match status" value="1"/>
</dbReference>
<dbReference type="SUPFAM" id="SSF51197">
    <property type="entry name" value="Clavaminate synthase-like"/>
    <property type="match status" value="1"/>
</dbReference>
<dbReference type="PROSITE" id="PS51471">
    <property type="entry name" value="FE2OG_OXY"/>
    <property type="match status" value="1"/>
</dbReference>
<organism>
    <name type="scientific">Burkholderia ambifaria (strain MC40-6)</name>
    <dbReference type="NCBI Taxonomy" id="398577"/>
    <lineage>
        <taxon>Bacteria</taxon>
        <taxon>Pseudomonadati</taxon>
        <taxon>Pseudomonadota</taxon>
        <taxon>Betaproteobacteria</taxon>
        <taxon>Burkholderiales</taxon>
        <taxon>Burkholderiaceae</taxon>
        <taxon>Burkholderia</taxon>
        <taxon>Burkholderia cepacia complex</taxon>
    </lineage>
</organism>
<keyword id="KW-0223">Dioxygenase</keyword>
<keyword id="KW-0408">Iron</keyword>
<keyword id="KW-0479">Metal-binding</keyword>
<keyword id="KW-0560">Oxidoreductase</keyword>
<keyword id="KW-0847">Vitamin C</keyword>
<feature type="chain" id="PRO_0000346470" description="PKHD-type hydroxylase BamMC406_5004">
    <location>
        <begin position="1"/>
        <end position="227"/>
    </location>
</feature>
<feature type="domain" description="Fe2OG dioxygenase" evidence="1">
    <location>
        <begin position="80"/>
        <end position="179"/>
    </location>
</feature>
<feature type="binding site" evidence="1">
    <location>
        <position position="98"/>
    </location>
    <ligand>
        <name>Fe cation</name>
        <dbReference type="ChEBI" id="CHEBI:24875"/>
    </ligand>
</feature>
<feature type="binding site" evidence="1">
    <location>
        <position position="100"/>
    </location>
    <ligand>
        <name>Fe cation</name>
        <dbReference type="ChEBI" id="CHEBI:24875"/>
    </ligand>
</feature>
<feature type="binding site" evidence="1">
    <location>
        <position position="160"/>
    </location>
    <ligand>
        <name>Fe cation</name>
        <dbReference type="ChEBI" id="CHEBI:24875"/>
    </ligand>
</feature>
<feature type="binding site" evidence="1">
    <location>
        <position position="170"/>
    </location>
    <ligand>
        <name>2-oxoglutarate</name>
        <dbReference type="ChEBI" id="CHEBI:16810"/>
    </ligand>
</feature>
<sequence length="227" mass="24860">MLVHIPNVLTPEQVSMLRDRLDRAGDAWVDGRATAGYTGAPVKRNQQIAEHSPVARELGDVILAALERNPLFISAALPNQVYPPLFNRYEGGMTFGSHVDGAVRVLPNGVKLRTDVSVTLFLSAPDEYDGGELVIEDAYGVQQVKLPAGDMIVYPATSLHQVTPVTRGVRVASFFWVQSLVRSDAQRALLFDMDTAIQRLNASGADTEACRSLVGCYHNLLRIWSET</sequence>
<reference key="1">
    <citation type="submission" date="2008-04" db="EMBL/GenBank/DDBJ databases">
        <title>Complete sequence of chromosome 2 of Burkholderia ambifaria MC40-6.</title>
        <authorList>
            <person name="Copeland A."/>
            <person name="Lucas S."/>
            <person name="Lapidus A."/>
            <person name="Glavina del Rio T."/>
            <person name="Dalin E."/>
            <person name="Tice H."/>
            <person name="Pitluck S."/>
            <person name="Chain P."/>
            <person name="Malfatti S."/>
            <person name="Shin M."/>
            <person name="Vergez L."/>
            <person name="Lang D."/>
            <person name="Schmutz J."/>
            <person name="Larimer F."/>
            <person name="Land M."/>
            <person name="Hauser L."/>
            <person name="Kyrpides N."/>
            <person name="Lykidis A."/>
            <person name="Ramette A."/>
            <person name="Konstantinidis K."/>
            <person name="Tiedje J."/>
            <person name="Richardson P."/>
        </authorList>
    </citation>
    <scope>NUCLEOTIDE SEQUENCE [LARGE SCALE GENOMIC DNA]</scope>
    <source>
        <strain>MC40-6</strain>
    </source>
</reference>
<protein>
    <recommendedName>
        <fullName evidence="1">PKHD-type hydroxylase BamMC406_5004</fullName>
        <ecNumber evidence="1">1.14.11.-</ecNumber>
    </recommendedName>
</protein>
<evidence type="ECO:0000255" key="1">
    <source>
        <dbReference type="HAMAP-Rule" id="MF_00657"/>
    </source>
</evidence>
<name>Y5004_BURA4</name>
<comment type="cofactor">
    <cofactor evidence="1">
        <name>Fe(2+)</name>
        <dbReference type="ChEBI" id="CHEBI:29033"/>
    </cofactor>
    <text evidence="1">Binds 1 Fe(2+) ion per subunit.</text>
</comment>
<comment type="cofactor">
    <cofactor evidence="1">
        <name>L-ascorbate</name>
        <dbReference type="ChEBI" id="CHEBI:38290"/>
    </cofactor>
</comment>
<proteinExistence type="inferred from homology"/>